<organism>
    <name type="scientific">Pseudomonas entomophila (strain L48)</name>
    <dbReference type="NCBI Taxonomy" id="384676"/>
    <lineage>
        <taxon>Bacteria</taxon>
        <taxon>Pseudomonadati</taxon>
        <taxon>Pseudomonadota</taxon>
        <taxon>Gammaproteobacteria</taxon>
        <taxon>Pseudomonadales</taxon>
        <taxon>Pseudomonadaceae</taxon>
        <taxon>Pseudomonas</taxon>
    </lineage>
</organism>
<protein>
    <recommendedName>
        <fullName evidence="1">Peptide chain release factor 1</fullName>
        <shortName evidence="1">RF-1</shortName>
    </recommendedName>
</protein>
<sequence length="360" mass="40101">MKASLLNKLDTLQDRFEELTALLGDAEVISDQTRFRAYSREYAEVEPVIACYVGWRKVQDDLEGAQALLKDADPDLREMAVEEVREAKEQLVGLESQLQRMLLPKDPNDGRNVFLEIRAGTGGDEAAIFSGDLFRMYSRYAEKRGWRLEILSENEGEHGGYKEIIARVEGDSVYGKLKFESGAHRVQRVPETESQGRIHTSACTVAVLPEPDEQVAIEINPADLRVDTYRASGAGGQHVNKTDSAIRITHLPTGIVVECQEERSQHKNRARAMSWLSAKLNDMQTSAAQNAIASERKLLVGSGDRSERIRTYNYPQGRVTDHRINLTLYSLDDILAGGVDAVIEPLLAEYQADQLAALGD</sequence>
<gene>
    <name evidence="1" type="primary">prfA</name>
    <name type="ordered locus">PSEEN0876</name>
</gene>
<name>RF1_PSEE4</name>
<proteinExistence type="inferred from homology"/>
<evidence type="ECO:0000255" key="1">
    <source>
        <dbReference type="HAMAP-Rule" id="MF_00093"/>
    </source>
</evidence>
<keyword id="KW-0963">Cytoplasm</keyword>
<keyword id="KW-0488">Methylation</keyword>
<keyword id="KW-0648">Protein biosynthesis</keyword>
<comment type="function">
    <text evidence="1">Peptide chain release factor 1 directs the termination of translation in response to the peptide chain termination codons UAG and UAA.</text>
</comment>
<comment type="subcellular location">
    <subcellularLocation>
        <location evidence="1">Cytoplasm</location>
    </subcellularLocation>
</comment>
<comment type="PTM">
    <text evidence="1">Methylated by PrmC. Methylation increases the termination efficiency of RF1.</text>
</comment>
<comment type="similarity">
    <text evidence="1">Belongs to the prokaryotic/mitochondrial release factor family.</text>
</comment>
<accession>Q1IEX1</accession>
<reference key="1">
    <citation type="journal article" date="2006" name="Nat. Biotechnol.">
        <title>Complete genome sequence of the entomopathogenic and metabolically versatile soil bacterium Pseudomonas entomophila.</title>
        <authorList>
            <person name="Vodovar N."/>
            <person name="Vallenet D."/>
            <person name="Cruveiller S."/>
            <person name="Rouy Z."/>
            <person name="Barbe V."/>
            <person name="Acosta C."/>
            <person name="Cattolico L."/>
            <person name="Jubin C."/>
            <person name="Lajus A."/>
            <person name="Segurens B."/>
            <person name="Vacherie B."/>
            <person name="Wincker P."/>
            <person name="Weissenbach J."/>
            <person name="Lemaitre B."/>
            <person name="Medigue C."/>
            <person name="Boccard F."/>
        </authorList>
    </citation>
    <scope>NUCLEOTIDE SEQUENCE [LARGE SCALE GENOMIC DNA]</scope>
    <source>
        <strain>L48</strain>
    </source>
</reference>
<feature type="chain" id="PRO_1000004933" description="Peptide chain release factor 1">
    <location>
        <begin position="1"/>
        <end position="360"/>
    </location>
</feature>
<feature type="modified residue" description="N5-methylglutamine" evidence="1">
    <location>
        <position position="237"/>
    </location>
</feature>
<dbReference type="EMBL" id="CT573326">
    <property type="protein sequence ID" value="CAK13784.1"/>
    <property type="molecule type" value="Genomic_DNA"/>
</dbReference>
<dbReference type="RefSeq" id="WP_011532211.1">
    <property type="nucleotide sequence ID" value="NC_008027.1"/>
</dbReference>
<dbReference type="SMR" id="Q1IEX1"/>
<dbReference type="STRING" id="384676.PSEEN0876"/>
<dbReference type="GeneID" id="32804177"/>
<dbReference type="KEGG" id="pen:PSEEN0876"/>
<dbReference type="eggNOG" id="COG0216">
    <property type="taxonomic scope" value="Bacteria"/>
</dbReference>
<dbReference type="HOGENOM" id="CLU_036856_0_1_6"/>
<dbReference type="OrthoDB" id="9806673at2"/>
<dbReference type="Proteomes" id="UP000000658">
    <property type="component" value="Chromosome"/>
</dbReference>
<dbReference type="GO" id="GO:0005737">
    <property type="term" value="C:cytoplasm"/>
    <property type="evidence" value="ECO:0007669"/>
    <property type="project" value="UniProtKB-SubCell"/>
</dbReference>
<dbReference type="GO" id="GO:0016149">
    <property type="term" value="F:translation release factor activity, codon specific"/>
    <property type="evidence" value="ECO:0007669"/>
    <property type="project" value="UniProtKB-UniRule"/>
</dbReference>
<dbReference type="FunFam" id="3.30.160.20:FF:000004">
    <property type="entry name" value="Peptide chain release factor 1"/>
    <property type="match status" value="1"/>
</dbReference>
<dbReference type="FunFam" id="3.30.70.1660:FF:000002">
    <property type="entry name" value="Peptide chain release factor 1"/>
    <property type="match status" value="1"/>
</dbReference>
<dbReference type="FunFam" id="3.30.70.1660:FF:000004">
    <property type="entry name" value="Peptide chain release factor 1"/>
    <property type="match status" value="1"/>
</dbReference>
<dbReference type="Gene3D" id="3.30.160.20">
    <property type="match status" value="1"/>
</dbReference>
<dbReference type="Gene3D" id="3.30.70.1660">
    <property type="match status" value="1"/>
</dbReference>
<dbReference type="Gene3D" id="6.10.140.1950">
    <property type="match status" value="1"/>
</dbReference>
<dbReference type="HAMAP" id="MF_00093">
    <property type="entry name" value="Rel_fac_1"/>
    <property type="match status" value="1"/>
</dbReference>
<dbReference type="InterPro" id="IPR005139">
    <property type="entry name" value="PCRF"/>
</dbReference>
<dbReference type="InterPro" id="IPR000352">
    <property type="entry name" value="Pep_chain_release_fac_I"/>
</dbReference>
<dbReference type="InterPro" id="IPR045853">
    <property type="entry name" value="Pep_chain_release_fac_I_sf"/>
</dbReference>
<dbReference type="InterPro" id="IPR050057">
    <property type="entry name" value="Prokaryotic/Mito_RF"/>
</dbReference>
<dbReference type="InterPro" id="IPR004373">
    <property type="entry name" value="RF-1"/>
</dbReference>
<dbReference type="NCBIfam" id="TIGR00019">
    <property type="entry name" value="prfA"/>
    <property type="match status" value="1"/>
</dbReference>
<dbReference type="NCBIfam" id="NF001859">
    <property type="entry name" value="PRK00591.1"/>
    <property type="match status" value="1"/>
</dbReference>
<dbReference type="PANTHER" id="PTHR43804">
    <property type="entry name" value="LD18447P"/>
    <property type="match status" value="1"/>
</dbReference>
<dbReference type="PANTHER" id="PTHR43804:SF7">
    <property type="entry name" value="LD18447P"/>
    <property type="match status" value="1"/>
</dbReference>
<dbReference type="Pfam" id="PF03462">
    <property type="entry name" value="PCRF"/>
    <property type="match status" value="1"/>
</dbReference>
<dbReference type="Pfam" id="PF00472">
    <property type="entry name" value="RF-1"/>
    <property type="match status" value="1"/>
</dbReference>
<dbReference type="SMART" id="SM00937">
    <property type="entry name" value="PCRF"/>
    <property type="match status" value="1"/>
</dbReference>
<dbReference type="SUPFAM" id="SSF75620">
    <property type="entry name" value="Release factor"/>
    <property type="match status" value="1"/>
</dbReference>
<dbReference type="PROSITE" id="PS00745">
    <property type="entry name" value="RF_PROK_I"/>
    <property type="match status" value="1"/>
</dbReference>